<sequence>MTSIQERGTSAHLHSLKEGEASDRSSEMLPKQRSIIGSHVQRPPSQTTLGRSRAGSNTMNKVSGLDIARRPSENLLSNMNCSDNGNGGNMLNSFVNSALPPPKVNPAQTRRERPASNSSIGTKTTEVFSSTSASSSLGDTSDEGEGSDADKSKINTFPSILMEKATQGRGANGNGMRSASNNTIVEATTDGSKMALQKSMSFDDTAAEKTMNKSRHSYQEQFSSKKSQSSLLNSKQRSRAKSQTCSSTGYNNSSILKTFGISSKISNSSDRIEASSLEFNVPSQKPLNCKPLTPSQKYRLRKEQSEMNLRNTIKRKEKFYDSQEQILELQEGDVDDSLIWNVPMASLSTNSFLASAKPDDMNNLAGKNDLSEYTGGLVNDNSEISYTKQNHRYSNISFASTTSNASLLDFNEMPTSPIPGLNKVTDFQFIQDTTKSLASVYLHSSNRLSRSKLSERTKSSDFLPIELKEAQNQGMEDLILVSENKLDVVSHSRPSWLPPKDRQEKKLHERQINKSMSVASLDQLGKNKDREEKLIRDETNRQKYVLLLDRDITRNSSLQSLSKMVWDTPFSDETRSTIYSEILQSKTRFITKNYIQPFHELQELLTKMGDFPKNKEIEISQLIETSLRRKVSGLHDICPDLMLLLKIKSISSQGIVTGDELLFHHFLVSESFQNLGLNEIWNIVNLVQMTCFNDLCKEKFDAKVLERKGVVAGYLSQNEEFKDEFNTECINSTTWWNILERIDHKLFMWIMDIIVVNNSQSYKNSPINEDEFVNKDWEYYRSKKVVINYKILISFALNVLLNYHFGFTDLRSLCNVNDQRFCIPVFINDEFVDADTVNAVFIKKWAHYYKKF</sequence>
<accession>A6ZT11</accession>
<gene>
    <name type="primary">SBE22</name>
    <name type="ORF">SCY_2495</name>
</gene>
<evidence type="ECO:0000250" key="1"/>
<evidence type="ECO:0000250" key="2">
    <source>
        <dbReference type="UniProtKB" id="P38814"/>
    </source>
</evidence>
<evidence type="ECO:0000256" key="3">
    <source>
        <dbReference type="SAM" id="MobiDB-lite"/>
    </source>
</evidence>
<evidence type="ECO:0000305" key="4"/>
<reference key="1">
    <citation type="journal article" date="2007" name="Proc. Natl. Acad. Sci. U.S.A.">
        <title>Genome sequencing and comparative analysis of Saccharomyces cerevisiae strain YJM789.</title>
        <authorList>
            <person name="Wei W."/>
            <person name="McCusker J.H."/>
            <person name="Hyman R.W."/>
            <person name="Jones T."/>
            <person name="Ning Y."/>
            <person name="Cao Z."/>
            <person name="Gu Z."/>
            <person name="Bruno D."/>
            <person name="Miranda M."/>
            <person name="Nguyen M."/>
            <person name="Wilhelmy J."/>
            <person name="Komp C."/>
            <person name="Tamse R."/>
            <person name="Wang X."/>
            <person name="Jia P."/>
            <person name="Luedi P."/>
            <person name="Oefner P.J."/>
            <person name="David L."/>
            <person name="Dietrich F.S."/>
            <person name="Li Y."/>
            <person name="Davis R.W."/>
            <person name="Steinmetz L.M."/>
        </authorList>
    </citation>
    <scope>NUCLEOTIDE SEQUENCE [LARGE SCALE GENOMIC DNA]</scope>
    <source>
        <strain>YJM789</strain>
    </source>
</reference>
<organism>
    <name type="scientific">Saccharomyces cerevisiae (strain YJM789)</name>
    <name type="common">Baker's yeast</name>
    <dbReference type="NCBI Taxonomy" id="307796"/>
    <lineage>
        <taxon>Eukaryota</taxon>
        <taxon>Fungi</taxon>
        <taxon>Dikarya</taxon>
        <taxon>Ascomycota</taxon>
        <taxon>Saccharomycotina</taxon>
        <taxon>Saccharomycetes</taxon>
        <taxon>Saccharomycetales</taxon>
        <taxon>Saccharomycetaceae</taxon>
        <taxon>Saccharomyces</taxon>
    </lineage>
</organism>
<feature type="chain" id="PRO_0000320510" description="Protein SBE22">
    <location>
        <begin position="1"/>
        <end position="852"/>
    </location>
</feature>
<feature type="region of interest" description="Disordered" evidence="3">
    <location>
        <begin position="1"/>
        <end position="158"/>
    </location>
</feature>
<feature type="region of interest" description="Disordered" evidence="3">
    <location>
        <begin position="206"/>
        <end position="248"/>
    </location>
</feature>
<feature type="compositionally biased region" description="Basic and acidic residues" evidence="3">
    <location>
        <begin position="15"/>
        <end position="26"/>
    </location>
</feature>
<feature type="compositionally biased region" description="Polar residues" evidence="3">
    <location>
        <begin position="43"/>
        <end position="61"/>
    </location>
</feature>
<feature type="compositionally biased region" description="Polar residues" evidence="3">
    <location>
        <begin position="74"/>
        <end position="96"/>
    </location>
</feature>
<feature type="compositionally biased region" description="Low complexity" evidence="3">
    <location>
        <begin position="124"/>
        <end position="139"/>
    </location>
</feature>
<feature type="compositionally biased region" description="Low complexity" evidence="3">
    <location>
        <begin position="224"/>
        <end position="235"/>
    </location>
</feature>
<feature type="modified residue" description="Phosphoserine" evidence="2">
    <location>
        <position position="72"/>
    </location>
</feature>
<feature type="modified residue" description="Phosphoserine" evidence="2">
    <location>
        <position position="201"/>
    </location>
</feature>
<feature type="modified residue" description="Phosphoserine" evidence="2">
    <location>
        <position position="459"/>
    </location>
</feature>
<feature type="modified residue" description="Phosphoserine" evidence="2">
    <location>
        <position position="517"/>
    </location>
</feature>
<feature type="modified residue" description="Phosphoserine" evidence="2">
    <location>
        <position position="520"/>
    </location>
</feature>
<keyword id="KW-0961">Cell wall biogenesis/degradation</keyword>
<keyword id="KW-0963">Cytoplasm</keyword>
<keyword id="KW-0333">Golgi apparatus</keyword>
<keyword id="KW-0597">Phosphoprotein</keyword>
<keyword id="KW-0653">Protein transport</keyword>
<keyword id="KW-0813">Transport</keyword>
<protein>
    <recommendedName>
        <fullName>Protein SBE22</fullName>
    </recommendedName>
</protein>
<dbReference type="EMBL" id="AAFW02000082">
    <property type="protein sequence ID" value="EDN62342.1"/>
    <property type="molecule type" value="Genomic_DNA"/>
</dbReference>
<dbReference type="HOGENOM" id="CLU_019068_0_0_1"/>
<dbReference type="Proteomes" id="UP000007060">
    <property type="component" value="Unassembled WGS sequence"/>
</dbReference>
<dbReference type="GO" id="GO:0005794">
    <property type="term" value="C:Golgi apparatus"/>
    <property type="evidence" value="ECO:0007669"/>
    <property type="project" value="UniProtKB-SubCell"/>
</dbReference>
<dbReference type="GO" id="GO:0031505">
    <property type="term" value="P:fungal-type cell wall organization"/>
    <property type="evidence" value="ECO:0007669"/>
    <property type="project" value="InterPro"/>
</dbReference>
<dbReference type="GO" id="GO:0015031">
    <property type="term" value="P:protein transport"/>
    <property type="evidence" value="ECO:0007669"/>
    <property type="project" value="UniProtKB-KW"/>
</dbReference>
<dbReference type="InterPro" id="IPR031403">
    <property type="entry name" value="Sbe2/Sbe22_C"/>
</dbReference>
<dbReference type="InterPro" id="IPR053949">
    <property type="entry name" value="SBE2/SBE22_M"/>
</dbReference>
<dbReference type="InterPro" id="IPR053948">
    <property type="entry name" value="SBE2/SBE22_N"/>
</dbReference>
<dbReference type="Pfam" id="PF17076">
    <property type="entry name" value="SBE2_C"/>
    <property type="match status" value="1"/>
</dbReference>
<dbReference type="Pfam" id="PF22874">
    <property type="entry name" value="SBE2_M"/>
    <property type="match status" value="1"/>
</dbReference>
<dbReference type="Pfam" id="PF22876">
    <property type="entry name" value="SBE2_N"/>
    <property type="match status" value="1"/>
</dbReference>
<proteinExistence type="inferred from homology"/>
<comment type="function">
    <text evidence="1">With SBE2, is involved in cell wall integrity and polarity processes like bud growth, through the transport of CHS3 and UTR2 to sites of growth.</text>
</comment>
<comment type="subcellular location">
    <subcellularLocation>
        <location evidence="1">Cytoplasm</location>
    </subcellularLocation>
    <subcellularLocation>
        <location evidence="1">Golgi apparatus</location>
    </subcellularLocation>
</comment>
<comment type="similarity">
    <text evidence="4">Belongs to the SBE2 family.</text>
</comment>
<name>SBE22_YEAS7</name>